<name>CD2AP_MOUSE</name>
<accession>Q9JLQ0</accession>
<accession>E9QL86</accession>
<accession>O88903</accession>
<accession>Q8K4Z1</accession>
<accession>Q8VCI9</accession>
<protein>
    <recommendedName>
        <fullName>CD2-associated protein</fullName>
    </recommendedName>
    <alternativeName>
        <fullName>Mesenchyme-to-epithelium transition protein with SH3 domains 1</fullName>
        <shortName>METS-1</shortName>
    </alternativeName>
</protein>
<keyword id="KW-0002">3D-structure</keyword>
<keyword id="KW-0131">Cell cycle</keyword>
<keyword id="KW-0132">Cell division</keyword>
<keyword id="KW-0965">Cell junction</keyword>
<keyword id="KW-0966">Cell projection</keyword>
<keyword id="KW-0175">Coiled coil</keyword>
<keyword id="KW-0963">Cytoplasm</keyword>
<keyword id="KW-0206">Cytoskeleton</keyword>
<keyword id="KW-1017">Isopeptide bond</keyword>
<keyword id="KW-0498">Mitosis</keyword>
<keyword id="KW-0597">Phosphoprotein</keyword>
<keyword id="KW-1185">Reference proteome</keyword>
<keyword id="KW-0677">Repeat</keyword>
<keyword id="KW-0728">SH3 domain</keyword>
<keyword id="KW-0729">SH3-binding</keyword>
<keyword id="KW-0832">Ubl conjugation</keyword>
<sequence length="637" mass="70450">MVDYIVEYDYDAVHDDELTIRVGEIIRNVKKLQEEGWLEGELNGRRGMFPDNFVKEIKRETEPKDDNLPIKRERQGNVASLVQRISTYGLPAGGIQPHPQTKAIKKKTKKRQCKVLFDYSPQNEDELELIVGDVIDVIEEVEEGWWSGTLNNKLGLFPSNFVKELESTEDGETHNAQEESEVPLTGPTSPLPSPGNGSEPAPGSVAQPKKIRGIGFGDIFKEGSVKLRTRTSSSETEEKKTEKPLILQPLGSRTQNVEVTKPDVDGKIKAKEYCRTLFPYTGTNEDELTFREGEIIHLISKETGEAGWWKGELNGKEGVFPDNFAVQISELDKDFPKPKKPPPPAKGPAPKPDLSAAEKKAFPLKAEEKDEKSLLEQKPSKPAAPQVPPKKPTAPTKASNLLRSPGAVYPKRPEKPVPPPPPAAKINGEVSIISSKIDTEPVSKPKLDPEQLPVRPKSVDLDAFVARNSKETDDVNFDDIASSENLLHLTANRPKMPGRRLPGRFNGGHSPTQSPEKTLKLPKEDDSGNLKPLEFKKDASYSSKSSLSTPSSASKVNTAAFLTPLELKAKAEADDGKRNSVDELRAQIIELLCIVDALKKDHGKELEKLRKELEEEKAMRSNLEVEIAKLKKAVLLS</sequence>
<organism>
    <name type="scientific">Mus musculus</name>
    <name type="common">Mouse</name>
    <dbReference type="NCBI Taxonomy" id="10090"/>
    <lineage>
        <taxon>Eukaryota</taxon>
        <taxon>Metazoa</taxon>
        <taxon>Chordata</taxon>
        <taxon>Craniata</taxon>
        <taxon>Vertebrata</taxon>
        <taxon>Euteleostomi</taxon>
        <taxon>Mammalia</taxon>
        <taxon>Eutheria</taxon>
        <taxon>Euarchontoglires</taxon>
        <taxon>Glires</taxon>
        <taxon>Rodentia</taxon>
        <taxon>Myomorpha</taxon>
        <taxon>Muroidea</taxon>
        <taxon>Muridae</taxon>
        <taxon>Murinae</taxon>
        <taxon>Mus</taxon>
        <taxon>Mus</taxon>
    </lineage>
</organism>
<reference key="1">
    <citation type="journal article" date="1998" name="Cell">
        <title>A novel adaptor protein orchestrates receptor patterning and cytoskeletal polarity in T-cell contacts.</title>
        <authorList>
            <person name="Dustin M.L."/>
            <person name="Olszowy M.W."/>
            <person name="Holdorf A.D."/>
            <person name="Li J."/>
            <person name="Bromley S."/>
            <person name="Desai N."/>
            <person name="Widder P."/>
            <person name="Rosenberger F."/>
            <person name="van der Merwe P.A."/>
            <person name="Allen P.M."/>
            <person name="Shaw A.S."/>
        </authorList>
    </citation>
    <scope>NUCLEOTIDE SEQUENCE [MRNA]</scope>
    <scope>FUNCTION</scope>
    <scope>INTERACTION WITH CD2</scope>
</reference>
<reference key="2">
    <citation type="journal article" date="2000" name="J. Biol. Chem.">
        <title>In vivo interaction of the adapter protein CD2-associated protein with the type 2 polycystic kidney disease protein, polycystin-2.</title>
        <authorList>
            <person name="Lehtonen S."/>
            <person name="Ora A."/>
            <person name="Olkkonen V.M."/>
            <person name="Geng L."/>
            <person name="Zerial M."/>
            <person name="Somlo S."/>
            <person name="Lehtonen E."/>
        </authorList>
    </citation>
    <scope>NUCLEOTIDE SEQUENCE [MRNA]</scope>
    <scope>INTERACTION WITH PKD2</scope>
</reference>
<reference key="3">
    <citation type="submission" date="2002-04" db="EMBL/GenBank/DDBJ databases">
        <title>Role of the interaction between CD2AP and c-Cbl.</title>
        <authorList>
            <person name="Meton I."/>
            <person name="Le Marchand-Brustel Y."/>
            <person name="Cormont M."/>
        </authorList>
    </citation>
    <scope>NUCLEOTIDE SEQUENCE [MRNA]</scope>
</reference>
<reference key="4">
    <citation type="journal article" date="2009" name="PLoS Biol.">
        <title>Lineage-specific biology revealed by a finished genome assembly of the mouse.</title>
        <authorList>
            <person name="Church D.M."/>
            <person name="Goodstadt L."/>
            <person name="Hillier L.W."/>
            <person name="Zody M.C."/>
            <person name="Goldstein S."/>
            <person name="She X."/>
            <person name="Bult C.J."/>
            <person name="Agarwala R."/>
            <person name="Cherry J.L."/>
            <person name="DiCuccio M."/>
            <person name="Hlavina W."/>
            <person name="Kapustin Y."/>
            <person name="Meric P."/>
            <person name="Maglott D."/>
            <person name="Birtle Z."/>
            <person name="Marques A.C."/>
            <person name="Graves T."/>
            <person name="Zhou S."/>
            <person name="Teague B."/>
            <person name="Potamousis K."/>
            <person name="Churas C."/>
            <person name="Place M."/>
            <person name="Herschleb J."/>
            <person name="Runnheim R."/>
            <person name="Forrest D."/>
            <person name="Amos-Landgraf J."/>
            <person name="Schwartz D.C."/>
            <person name="Cheng Z."/>
            <person name="Lindblad-Toh K."/>
            <person name="Eichler E.E."/>
            <person name="Ponting C.P."/>
        </authorList>
    </citation>
    <scope>NUCLEOTIDE SEQUENCE [LARGE SCALE GENOMIC DNA]</scope>
    <source>
        <strain>C57BL/6J</strain>
    </source>
</reference>
<reference key="5">
    <citation type="journal article" date="2004" name="Genome Res.">
        <title>The status, quality, and expansion of the NIH full-length cDNA project: the Mammalian Gene Collection (MGC).</title>
        <authorList>
            <consortium name="The MGC Project Team"/>
        </authorList>
    </citation>
    <scope>NUCLEOTIDE SEQUENCE [LARGE SCALE MRNA] OF 394-637</scope>
    <source>
        <tissue>Mammary tumor</tissue>
    </source>
</reference>
<reference key="6">
    <citation type="journal article" date="1999" name="Science">
        <title>Congenital nephrotic syndrome in mice lacking CD2-associated protein.</title>
        <authorList>
            <person name="Shih N.Y."/>
            <person name="Li J."/>
            <person name="Karpitskii V."/>
            <person name="Nguyen A."/>
            <person name="Dustin M.L."/>
            <person name="Kanagawa O."/>
            <person name="Miner J.H."/>
            <person name="Shaw A.S."/>
        </authorList>
    </citation>
    <scope>FUNCTION</scope>
    <scope>SUBCELLULAR LOCATION</scope>
    <scope>INTERACTION WITH NPHS1</scope>
    <scope>DISRUPTION PHENOTYPE</scope>
</reference>
<reference key="7">
    <citation type="journal article" date="2001" name="Am. J. Pathol.">
        <title>CD2AP localizes to the slit diaphragm and binds to nephrin via a novel C-terminal domain.</title>
        <authorList>
            <person name="Shih N.Y."/>
            <person name="Li J."/>
            <person name="Cotran R."/>
            <person name="Mundel P."/>
            <person name="Miner J.H."/>
            <person name="Shaw A.S."/>
        </authorList>
    </citation>
    <scope>SUBCELLULAR LOCATION</scope>
    <scope>INTERACTION WITH NPHS1</scope>
</reference>
<reference key="8">
    <citation type="journal article" date="2001" name="J. Clin. Invest.">
        <title>Podocin, a raft-associated component of the glomerular slit diaphragm, interacts with CD2AP and nephrin.</title>
        <authorList>
            <person name="Schwarz K."/>
            <person name="Simons M."/>
            <person name="Reiser J."/>
            <person name="Saleem M.A."/>
            <person name="Faul C."/>
            <person name="Kriz W."/>
            <person name="Shaw A.S."/>
            <person name="Holzman L.B."/>
            <person name="Mundel P."/>
        </authorList>
    </citation>
    <scope>INTERACTION WITH NPHS1 AND NPHS2</scope>
</reference>
<reference key="9">
    <citation type="journal article" date="2002" name="Am. J. Physiol.">
        <title>CD2-associated protein directly interacts with the actin cytoskeleton.</title>
        <authorList>
            <person name="Lehtonen S."/>
            <person name="Zhao F."/>
            <person name="Lehtonen E."/>
        </authorList>
    </citation>
    <scope>INTERACTION WITH F-ACTIN</scope>
</reference>
<reference key="10">
    <citation type="journal article" date="2004" name="J. Biol. Chem.">
        <title>A WT1 co-regulator controls podocyte phenotype by shuttling between adhesion structures and nucleus.</title>
        <authorList>
            <person name="Srichai M.B."/>
            <person name="Konieczkowski M."/>
            <person name="Padiyar A."/>
            <person name="Konieczkowski D.J."/>
            <person name="Mukherjee A."/>
            <person name="Hayden P.S."/>
            <person name="Kamat S."/>
            <person name="El-Meanawy M.A."/>
            <person name="Khan S."/>
            <person name="Mundel P."/>
            <person name="Lee S.B."/>
            <person name="Bruggeman L.A."/>
            <person name="Schelling J.R."/>
            <person name="Sedor J.R."/>
        </authorList>
    </citation>
    <scope>INTERACTION WITH WTIP</scope>
</reference>
<reference key="11">
    <citation type="journal article" date="2007" name="Proc. Natl. Acad. Sci. U.S.A.">
        <title>Nuclear relocation of the nephrin and CD2AP-binding protein dendrin promotes apoptosis of podocytes.</title>
        <authorList>
            <person name="Asanuma K."/>
            <person name="Campbell K.N."/>
            <person name="Kim K."/>
            <person name="Faul C."/>
            <person name="Mundel P."/>
        </authorList>
    </citation>
    <scope>INTERACTION WITH DDN</scope>
</reference>
<reference key="12">
    <citation type="journal article" date="2008" name="J. Neurosci.">
        <title>CD2AP and Cbl-3/Cbl-c constitute a critical checkpoint in the regulation of ret signal transduction.</title>
        <authorList>
            <person name="Tsui C.C."/>
            <person name="Pierchala B.A."/>
        </authorList>
    </citation>
    <scope>INTERACTION WITH RET</scope>
    <scope>TISSUE SPECIFICITY</scope>
</reference>
<reference key="13">
    <citation type="journal article" date="2009" name="Immunity">
        <title>The phagosomal proteome in interferon-gamma-activated macrophages.</title>
        <authorList>
            <person name="Trost M."/>
            <person name="English L."/>
            <person name="Lemieux S."/>
            <person name="Courcelles M."/>
            <person name="Desjardins M."/>
            <person name="Thibault P."/>
        </authorList>
    </citation>
    <scope>PHOSPHORYLATION [LARGE SCALE ANALYSIS] AT SER-458</scope>
    <scope>IDENTIFICATION BY MASS SPECTROMETRY [LARGE SCALE ANALYSIS]</scope>
</reference>
<reference key="14">
    <citation type="journal article" date="2010" name="Cell">
        <title>A tissue-specific atlas of mouse protein phosphorylation and expression.</title>
        <authorList>
            <person name="Huttlin E.L."/>
            <person name="Jedrychowski M.P."/>
            <person name="Elias J.E."/>
            <person name="Goswami T."/>
            <person name="Rad R."/>
            <person name="Beausoleil S.A."/>
            <person name="Villen J."/>
            <person name="Haas W."/>
            <person name="Sowa M.E."/>
            <person name="Gygi S.P."/>
        </authorList>
    </citation>
    <scope>PHOSPHORYLATION [LARGE SCALE ANALYSIS] AT SER-224; SER-458; SER-510 AND SER-514</scope>
    <scope>IDENTIFICATION BY MASS SPECTROMETRY [LARGE SCALE ANALYSIS]</scope>
    <source>
        <tissue>Brown adipose tissue</tissue>
        <tissue>Heart</tissue>
        <tissue>Kidney</tissue>
        <tissue>Liver</tissue>
        <tissue>Lung</tissue>
        <tissue>Pancreas</tissue>
        <tissue>Spleen</tissue>
        <tissue>Testis</tissue>
    </source>
</reference>
<reference key="15">
    <citation type="journal article" date="2007" name="J. Biomol. NMR">
        <title>The high resolution NMR structure of the third SH3 domain of CD2AP.</title>
        <authorList>
            <person name="Ortega Roldan J.L."/>
            <person name="Romero Romero M.L."/>
            <person name="Ora A."/>
            <person name="Ab E."/>
            <person name="Lopez Mayorga O."/>
            <person name="Azuaga A.I."/>
            <person name="van Nuland N.A."/>
        </authorList>
    </citation>
    <scope>STRUCTURE BY NMR OF 270-329</scope>
</reference>
<proteinExistence type="evidence at protein level"/>
<evidence type="ECO:0000250" key="1"/>
<evidence type="ECO:0000250" key="2">
    <source>
        <dbReference type="UniProtKB" id="F1LRS8"/>
    </source>
</evidence>
<evidence type="ECO:0000250" key="3">
    <source>
        <dbReference type="UniProtKB" id="Q9Y5K6"/>
    </source>
</evidence>
<evidence type="ECO:0000255" key="4"/>
<evidence type="ECO:0000255" key="5">
    <source>
        <dbReference type="PROSITE-ProRule" id="PRU00192"/>
    </source>
</evidence>
<evidence type="ECO:0000256" key="6">
    <source>
        <dbReference type="SAM" id="MobiDB-lite"/>
    </source>
</evidence>
<evidence type="ECO:0000269" key="7">
    <source>
    </source>
</evidence>
<evidence type="ECO:0000269" key="8">
    <source>
    </source>
</evidence>
<evidence type="ECO:0000269" key="9">
    <source>
    </source>
</evidence>
<evidence type="ECO:0000269" key="10">
    <source>
    </source>
</evidence>
<evidence type="ECO:0000269" key="11">
    <source>
    </source>
</evidence>
<evidence type="ECO:0000269" key="12">
    <source>
    </source>
</evidence>
<evidence type="ECO:0000269" key="13">
    <source>
    </source>
</evidence>
<evidence type="ECO:0000269" key="14">
    <source>
    </source>
</evidence>
<evidence type="ECO:0000269" key="15">
    <source>
    </source>
</evidence>
<evidence type="ECO:0000305" key="16"/>
<evidence type="ECO:0007744" key="17">
    <source>
    </source>
</evidence>
<evidence type="ECO:0007744" key="18">
    <source>
    </source>
</evidence>
<evidence type="ECO:0007829" key="19">
    <source>
        <dbReference type="PDB" id="2JTE"/>
    </source>
</evidence>
<evidence type="ECO:0007829" key="20">
    <source>
        <dbReference type="PDB" id="2KRM"/>
    </source>
</evidence>
<evidence type="ECO:0007829" key="21">
    <source>
        <dbReference type="PDB" id="2KRN"/>
    </source>
</evidence>
<evidence type="ECO:0007829" key="22">
    <source>
        <dbReference type="PDB" id="2MCN"/>
    </source>
</evidence>
<comment type="function">
    <text evidence="2 3 7 15">Seems to act as an adapter protein between membrane proteins and the actin cytoskeleton (By similarity). In collaboration with CBLC, modulates the rate of RET turnover and may act as regulatory checkpoint that limits the potency of GDNF on neuronal survival. Controls CBLC function, converting it from an inhibitor to a promoter of RET degradation (By similarity). May play a role in receptor clustering and cytoskeletal polarity in the junction between T-cell and antigen-presenting cell (PubMed:9741631). May anchor the podocyte slit diaphragm to the actin cytoskeleton in renal glomerolus (PubMed:10514378). Also required for cytokinesis. Plays a role in epithelial cell junctions formation (By similarity).</text>
</comment>
<comment type="subunit">
    <text evidence="3 7 8 9 10 11 12 13 14 15 16">Homodimer. Interacts with F-actin, PKD2, NPHS1 and NPHS2. Interacts with WTIP. Interacts with DDN; interaction is direct. Interacts (via SH3 2 domain) with CBL (via phosphorylated C-terminus). Interacts with BCAR1/p130Cas (via SH3 domain). Interacts with MVB12A and ARHGAP17. Interacts with ANLN, CD2 and CBLB. Interacts with PDCD6IP and TSG101. Interacts with RIN3. Interacts directly with RET (inactive) and CBLC; upon RET activation by GDNF suggested to dissociate from RET as CBLC:CD2AP complex. Interacts with CGNL1 and SH3BP1; probably part of a complex at cell junctions. Interacts with CAPZA1.</text>
</comment>
<comment type="interaction">
    <interactant intactId="EBI-644807">
        <id>Q9JLQ0</id>
    </interactant>
    <interactant intactId="EBI-640919">
        <id>P22682</id>
        <label>Cbl</label>
    </interactant>
    <organismsDiffer>false</organismsDiffer>
    <experiments>5</experiments>
</comment>
<comment type="subcellular location">
    <subcellularLocation>
        <location evidence="3">Cytoplasm</location>
        <location evidence="3">Cytoskeleton</location>
    </subcellularLocation>
    <subcellularLocation>
        <location evidence="3">Cell projection</location>
        <location evidence="3">Ruffle</location>
    </subcellularLocation>
    <subcellularLocation>
        <location evidence="3">Cell junction</location>
    </subcellularLocation>
    <text evidence="3 7 9">Colocalizes with F-actin and BCAR1/p130Cas in membrane ruffles (By similarity). Located at podocyte slit diaphragm between podocyte foot processes (PubMed:10514378, PubMed:11733379). During late anaphase and telophase, concentrates in the vicinity of the midzone microtubules and in the midbody in late telophase (By similarity).</text>
</comment>
<comment type="tissue specificity">
    <text evidence="14">Expressed in podocytes (at protein level).</text>
</comment>
<comment type="domain">
    <text evidence="1">Potential homodimerization is mediated by the coiled coil domain.</text>
</comment>
<comment type="PTM">
    <text evidence="1">Phosphorylated on tyrosine residues; probably by c-Abl, Fyn and c-Src.</text>
</comment>
<comment type="disruption phenotype">
    <text evidence="7">Death at 6 to 7 weeks of age from renal failure. Mice show defects in epithelial foot processes, accompanied by mesangial cell hyperplasia and extracellular matrix deposition.</text>
</comment>
<gene>
    <name type="primary">Cd2ap</name>
    <name type="synonym">Mets1</name>
</gene>
<dbReference type="EMBL" id="AF077003">
    <property type="protein sequence ID" value="AAC36099.1"/>
    <property type="molecule type" value="mRNA"/>
</dbReference>
<dbReference type="EMBL" id="AF149092">
    <property type="protein sequence ID" value="AAF73150.1"/>
    <property type="molecule type" value="mRNA"/>
</dbReference>
<dbReference type="EMBL" id="AJ459109">
    <property type="protein sequence ID" value="CAD30510.1"/>
    <property type="molecule type" value="mRNA"/>
</dbReference>
<dbReference type="EMBL" id="AC111082">
    <property type="status" value="NOT_ANNOTATED_CDS"/>
    <property type="molecule type" value="Genomic_DNA"/>
</dbReference>
<dbReference type="EMBL" id="BC019744">
    <property type="protein sequence ID" value="AAH19744.1"/>
    <property type="molecule type" value="mRNA"/>
</dbReference>
<dbReference type="CCDS" id="CCDS50114.1"/>
<dbReference type="RefSeq" id="NP_033977.3">
    <property type="nucleotide sequence ID" value="NM_009847.3"/>
</dbReference>
<dbReference type="PDB" id="2JTE">
    <property type="method" value="NMR"/>
    <property type="chains" value="A=270-329"/>
</dbReference>
<dbReference type="PDB" id="2KRM">
    <property type="method" value="NMR"/>
    <property type="chains" value="A=2-58"/>
</dbReference>
<dbReference type="PDB" id="2KRN">
    <property type="method" value="NMR"/>
    <property type="chains" value="A=111-166"/>
</dbReference>
<dbReference type="PDB" id="2KRO">
    <property type="method" value="NMR"/>
    <property type="chains" value="A=270-329"/>
</dbReference>
<dbReference type="PDB" id="2LZ6">
    <property type="method" value="NMR"/>
    <property type="chains" value="B=270-329"/>
</dbReference>
<dbReference type="PDB" id="2MCN">
    <property type="method" value="NMR"/>
    <property type="chains" value="A=2-62"/>
</dbReference>
<dbReference type="PDBsum" id="2JTE"/>
<dbReference type="PDBsum" id="2KRM"/>
<dbReference type="PDBsum" id="2KRN"/>
<dbReference type="PDBsum" id="2KRO"/>
<dbReference type="PDBsum" id="2LZ6"/>
<dbReference type="PDBsum" id="2MCN"/>
<dbReference type="SMR" id="Q9JLQ0"/>
<dbReference type="BioGRID" id="198584">
    <property type="interactions" value="93"/>
</dbReference>
<dbReference type="CORUM" id="Q9JLQ0"/>
<dbReference type="FunCoup" id="Q9JLQ0">
    <property type="interactions" value="1912"/>
</dbReference>
<dbReference type="IntAct" id="Q9JLQ0">
    <property type="interactions" value="80"/>
</dbReference>
<dbReference type="MINT" id="Q9JLQ0"/>
<dbReference type="STRING" id="10090.ENSMUSP00000024709"/>
<dbReference type="GlyGen" id="Q9JLQ0">
    <property type="glycosylation" value="3 sites, 1 O-linked glycan (1 site)"/>
</dbReference>
<dbReference type="iPTMnet" id="Q9JLQ0"/>
<dbReference type="PhosphoSitePlus" id="Q9JLQ0"/>
<dbReference type="CPTAC" id="non-CPTAC-3968"/>
<dbReference type="jPOST" id="Q9JLQ0"/>
<dbReference type="PaxDb" id="10090-ENSMUSP00000024709"/>
<dbReference type="PeptideAtlas" id="Q9JLQ0"/>
<dbReference type="ProteomicsDB" id="281264"/>
<dbReference type="Pumba" id="Q9JLQ0"/>
<dbReference type="Antibodypedia" id="1016">
    <property type="antibodies" value="175 antibodies from 33 providers"/>
</dbReference>
<dbReference type="Ensembl" id="ENSMUST00000024709.9">
    <property type="protein sequence ID" value="ENSMUSP00000024709.8"/>
    <property type="gene ID" value="ENSMUSG00000061665.8"/>
</dbReference>
<dbReference type="GeneID" id="12488"/>
<dbReference type="KEGG" id="mmu:12488"/>
<dbReference type="UCSC" id="uc008cot.1">
    <property type="organism name" value="mouse"/>
</dbReference>
<dbReference type="AGR" id="MGI:1330281"/>
<dbReference type="CTD" id="23607"/>
<dbReference type="MGI" id="MGI:1330281">
    <property type="gene designation" value="Cd2ap"/>
</dbReference>
<dbReference type="VEuPathDB" id="HostDB:ENSMUSG00000061665"/>
<dbReference type="eggNOG" id="KOG4348">
    <property type="taxonomic scope" value="Eukaryota"/>
</dbReference>
<dbReference type="GeneTree" id="ENSGT00940000157566"/>
<dbReference type="HOGENOM" id="CLU_024255_2_0_1"/>
<dbReference type="InParanoid" id="Q9JLQ0"/>
<dbReference type="OMA" id="SKXKPKK"/>
<dbReference type="OrthoDB" id="5340910at2759"/>
<dbReference type="PhylomeDB" id="Q9JLQ0"/>
<dbReference type="TreeFam" id="TF350191"/>
<dbReference type="BioGRID-ORCS" id="12488">
    <property type="hits" value="4 hits in 79 CRISPR screens"/>
</dbReference>
<dbReference type="ChiTaRS" id="Cd2ap">
    <property type="organism name" value="mouse"/>
</dbReference>
<dbReference type="EvolutionaryTrace" id="Q9JLQ0"/>
<dbReference type="PRO" id="PR:Q9JLQ0"/>
<dbReference type="Proteomes" id="UP000000589">
    <property type="component" value="Chromosome 17"/>
</dbReference>
<dbReference type="RNAct" id="Q9JLQ0">
    <property type="molecule type" value="protein"/>
</dbReference>
<dbReference type="Bgee" id="ENSMUSG00000061665">
    <property type="expression patterns" value="Expressed in metanephric cortical collecting duct and 276 other cell types or tissues"/>
</dbReference>
<dbReference type="ExpressionAtlas" id="Q9JLQ0">
    <property type="expression patterns" value="baseline and differential"/>
</dbReference>
<dbReference type="GO" id="GO:0005884">
    <property type="term" value="C:actin filament"/>
    <property type="evidence" value="ECO:0000314"/>
    <property type="project" value="MGI"/>
</dbReference>
<dbReference type="GO" id="GO:0030424">
    <property type="term" value="C:axon"/>
    <property type="evidence" value="ECO:0000314"/>
    <property type="project" value="ARUK-UCL"/>
</dbReference>
<dbReference type="GO" id="GO:0005938">
    <property type="term" value="C:cell cortex"/>
    <property type="evidence" value="ECO:0000266"/>
    <property type="project" value="MGI"/>
</dbReference>
<dbReference type="GO" id="GO:0071944">
    <property type="term" value="C:cell periphery"/>
    <property type="evidence" value="ECO:0000314"/>
    <property type="project" value="MGI"/>
</dbReference>
<dbReference type="GO" id="GO:0005911">
    <property type="term" value="C:cell-cell junction"/>
    <property type="evidence" value="ECO:0000314"/>
    <property type="project" value="MGI"/>
</dbReference>
<dbReference type="GO" id="GO:0034451">
    <property type="term" value="C:centriolar satellite"/>
    <property type="evidence" value="ECO:0007669"/>
    <property type="project" value="Ensembl"/>
</dbReference>
<dbReference type="GO" id="GO:0005737">
    <property type="term" value="C:cytoplasm"/>
    <property type="evidence" value="ECO:0000314"/>
    <property type="project" value="MGI"/>
</dbReference>
<dbReference type="GO" id="GO:0005829">
    <property type="term" value="C:cytosol"/>
    <property type="evidence" value="ECO:0000304"/>
    <property type="project" value="Reactome"/>
</dbReference>
<dbReference type="GO" id="GO:0030425">
    <property type="term" value="C:dendrite"/>
    <property type="evidence" value="ECO:0000314"/>
    <property type="project" value="ARUK-UCL"/>
</dbReference>
<dbReference type="GO" id="GO:0001650">
    <property type="term" value="C:fibrillar center"/>
    <property type="evidence" value="ECO:0007669"/>
    <property type="project" value="Ensembl"/>
</dbReference>
<dbReference type="GO" id="GO:0031941">
    <property type="term" value="C:filamentous actin"/>
    <property type="evidence" value="ECO:0007669"/>
    <property type="project" value="Ensembl"/>
</dbReference>
<dbReference type="GO" id="GO:0030426">
    <property type="term" value="C:growth cone"/>
    <property type="evidence" value="ECO:0000315"/>
    <property type="project" value="MGI"/>
</dbReference>
<dbReference type="GO" id="GO:0005770">
    <property type="term" value="C:late endosome"/>
    <property type="evidence" value="ECO:0000314"/>
    <property type="project" value="MGI"/>
</dbReference>
<dbReference type="GO" id="GO:0031594">
    <property type="term" value="C:neuromuscular junction"/>
    <property type="evidence" value="ECO:0000314"/>
    <property type="project" value="SynGO"/>
</dbReference>
<dbReference type="GO" id="GO:0043005">
    <property type="term" value="C:neuron projection"/>
    <property type="evidence" value="ECO:0000315"/>
    <property type="project" value="MGI"/>
</dbReference>
<dbReference type="GO" id="GO:0005641">
    <property type="term" value="C:nuclear envelope lumen"/>
    <property type="evidence" value="ECO:0000314"/>
    <property type="project" value="MGI"/>
</dbReference>
<dbReference type="GO" id="GO:0005886">
    <property type="term" value="C:plasma membrane"/>
    <property type="evidence" value="ECO:0000314"/>
    <property type="project" value="MGI"/>
</dbReference>
<dbReference type="GO" id="GO:0002102">
    <property type="term" value="C:podosome"/>
    <property type="evidence" value="ECO:0000314"/>
    <property type="project" value="MGI"/>
</dbReference>
<dbReference type="GO" id="GO:0032991">
    <property type="term" value="C:protein-containing complex"/>
    <property type="evidence" value="ECO:0000314"/>
    <property type="project" value="MGI"/>
</dbReference>
<dbReference type="GO" id="GO:0001726">
    <property type="term" value="C:ruffle"/>
    <property type="evidence" value="ECO:0007669"/>
    <property type="project" value="UniProtKB-SubCell"/>
</dbReference>
<dbReference type="GO" id="GO:0036057">
    <property type="term" value="C:slit diaphragm"/>
    <property type="evidence" value="ECO:0000314"/>
    <property type="project" value="MGI"/>
</dbReference>
<dbReference type="GO" id="GO:0032588">
    <property type="term" value="C:trans-Golgi network membrane"/>
    <property type="evidence" value="ECO:0000314"/>
    <property type="project" value="MGI"/>
</dbReference>
<dbReference type="GO" id="GO:0031982">
    <property type="term" value="C:vesicle"/>
    <property type="evidence" value="ECO:0000314"/>
    <property type="project" value="ARUK-UCL"/>
</dbReference>
<dbReference type="GO" id="GO:0003779">
    <property type="term" value="F:actin binding"/>
    <property type="evidence" value="ECO:0000314"/>
    <property type="project" value="MGI"/>
</dbReference>
<dbReference type="GO" id="GO:0051015">
    <property type="term" value="F:actin filament binding"/>
    <property type="evidence" value="ECO:0000314"/>
    <property type="project" value="MGI"/>
</dbReference>
<dbReference type="GO" id="GO:0030276">
    <property type="term" value="F:clathrin binding"/>
    <property type="evidence" value="ECO:0000314"/>
    <property type="project" value="MGI"/>
</dbReference>
<dbReference type="GO" id="GO:0042802">
    <property type="term" value="F:identical protein binding"/>
    <property type="evidence" value="ECO:0007669"/>
    <property type="project" value="Ensembl"/>
</dbReference>
<dbReference type="GO" id="GO:0036312">
    <property type="term" value="F:phosphatidylinositol 3-kinase regulatory subunit binding"/>
    <property type="evidence" value="ECO:0000314"/>
    <property type="project" value="MGI"/>
</dbReference>
<dbReference type="GO" id="GO:0017124">
    <property type="term" value="F:SH3 domain binding"/>
    <property type="evidence" value="ECO:0007669"/>
    <property type="project" value="UniProtKB-KW"/>
</dbReference>
<dbReference type="GO" id="GO:0007015">
    <property type="term" value="P:actin filament organization"/>
    <property type="evidence" value="ECO:0000250"/>
    <property type="project" value="UniProtKB"/>
</dbReference>
<dbReference type="GO" id="GO:0030041">
    <property type="term" value="P:actin filament polymerization"/>
    <property type="evidence" value="ECO:0000315"/>
    <property type="project" value="MGI"/>
</dbReference>
<dbReference type="GO" id="GO:0060612">
    <property type="term" value="P:adipose tissue development"/>
    <property type="evidence" value="ECO:0000314"/>
    <property type="project" value="MGI"/>
</dbReference>
<dbReference type="GO" id="GO:0006915">
    <property type="term" value="P:apoptotic process"/>
    <property type="evidence" value="ECO:0000315"/>
    <property type="project" value="MGI"/>
</dbReference>
<dbReference type="GO" id="GO:0030154">
    <property type="term" value="P:cell differentiation"/>
    <property type="evidence" value="ECO:0000316"/>
    <property type="project" value="MGI"/>
</dbReference>
<dbReference type="GO" id="GO:0051301">
    <property type="term" value="P:cell division"/>
    <property type="evidence" value="ECO:0007669"/>
    <property type="project" value="UniProtKB-KW"/>
</dbReference>
<dbReference type="GO" id="GO:0008283">
    <property type="term" value="P:cell population proliferation"/>
    <property type="evidence" value="ECO:0000315"/>
    <property type="project" value="MGI"/>
</dbReference>
<dbReference type="GO" id="GO:0044331">
    <property type="term" value="P:cell-cell adhesion mediated by cadherin"/>
    <property type="evidence" value="ECO:0000316"/>
    <property type="project" value="MGI"/>
</dbReference>
<dbReference type="GO" id="GO:0045216">
    <property type="term" value="P:cell-cell junction organization"/>
    <property type="evidence" value="ECO:0000315"/>
    <property type="project" value="MGI"/>
</dbReference>
<dbReference type="GO" id="GO:0048668">
    <property type="term" value="P:collateral sprouting"/>
    <property type="evidence" value="ECO:0000315"/>
    <property type="project" value="MGI"/>
</dbReference>
<dbReference type="GO" id="GO:0046323">
    <property type="term" value="P:D-glucose import"/>
    <property type="evidence" value="ECO:0000315"/>
    <property type="project" value="MGI"/>
</dbReference>
<dbReference type="GO" id="GO:0003158">
    <property type="term" value="P:endothelium development"/>
    <property type="evidence" value="ECO:0000315"/>
    <property type="project" value="MGI"/>
</dbReference>
<dbReference type="GO" id="GO:0070371">
    <property type="term" value="P:ERK1 and ERK2 cascade"/>
    <property type="evidence" value="ECO:0000316"/>
    <property type="project" value="MGI"/>
</dbReference>
<dbReference type="GO" id="GO:0046847">
    <property type="term" value="P:filopodium assembly"/>
    <property type="evidence" value="ECO:0000315"/>
    <property type="project" value="MGI"/>
</dbReference>
<dbReference type="GO" id="GO:0010467">
    <property type="term" value="P:gene expression"/>
    <property type="evidence" value="ECO:0000315"/>
    <property type="project" value="MGI"/>
</dbReference>
<dbReference type="GO" id="GO:0032835">
    <property type="term" value="P:glomerulus development"/>
    <property type="evidence" value="ECO:0000315"/>
    <property type="project" value="MGI"/>
</dbReference>
<dbReference type="GO" id="GO:0001771">
    <property type="term" value="P:immunological synapse formation"/>
    <property type="evidence" value="ECO:0000315"/>
    <property type="project" value="MGI"/>
</dbReference>
<dbReference type="GO" id="GO:0006954">
    <property type="term" value="P:inflammatory response"/>
    <property type="evidence" value="ECO:0000315"/>
    <property type="project" value="MGI"/>
</dbReference>
<dbReference type="GO" id="GO:0001822">
    <property type="term" value="P:kidney development"/>
    <property type="evidence" value="ECO:0000314"/>
    <property type="project" value="MGI"/>
</dbReference>
<dbReference type="GO" id="GO:0006629">
    <property type="term" value="P:lipid metabolic process"/>
    <property type="evidence" value="ECO:0000314"/>
    <property type="project" value="MGI"/>
</dbReference>
<dbReference type="GO" id="GO:0001889">
    <property type="term" value="P:liver development"/>
    <property type="evidence" value="ECO:0000314"/>
    <property type="project" value="MGI"/>
</dbReference>
<dbReference type="GO" id="GO:0051674">
    <property type="term" value="P:localization of cell"/>
    <property type="evidence" value="ECO:0000316"/>
    <property type="project" value="MGI"/>
</dbReference>
<dbReference type="GO" id="GO:0048535">
    <property type="term" value="P:lymph node development"/>
    <property type="evidence" value="ECO:0000315"/>
    <property type="project" value="MGI"/>
</dbReference>
<dbReference type="GO" id="GO:0035633">
    <property type="term" value="P:maintenance of blood-brain barrier"/>
    <property type="evidence" value="ECO:0000315"/>
    <property type="project" value="MGI"/>
</dbReference>
<dbReference type="GO" id="GO:0008584">
    <property type="term" value="P:male gonad development"/>
    <property type="evidence" value="ECO:0000315"/>
    <property type="project" value="MGI"/>
</dbReference>
<dbReference type="GO" id="GO:0061024">
    <property type="term" value="P:membrane organization"/>
    <property type="evidence" value="ECO:0000315"/>
    <property type="project" value="MGI"/>
</dbReference>
<dbReference type="GO" id="GO:0043524">
    <property type="term" value="P:negative regulation of neuron apoptotic process"/>
    <property type="evidence" value="ECO:0000314"/>
    <property type="project" value="MGI"/>
</dbReference>
<dbReference type="GO" id="GO:0051058">
    <property type="term" value="P:negative regulation of small GTPase mediated signal transduction"/>
    <property type="evidence" value="ECO:0000250"/>
    <property type="project" value="UniProtKB"/>
</dbReference>
<dbReference type="GO" id="GO:0032911">
    <property type="term" value="P:negative regulation of transforming growth factor beta1 production"/>
    <property type="evidence" value="ECO:0000316"/>
    <property type="project" value="MGI"/>
</dbReference>
<dbReference type="GO" id="GO:0038180">
    <property type="term" value="P:nerve growth factor signaling pathway"/>
    <property type="evidence" value="ECO:0000315"/>
    <property type="project" value="MGI"/>
</dbReference>
<dbReference type="GO" id="GO:0031175">
    <property type="term" value="P:neuron projection development"/>
    <property type="evidence" value="ECO:0000315"/>
    <property type="project" value="MGI"/>
</dbReference>
<dbReference type="GO" id="GO:0038179">
    <property type="term" value="P:neurotrophin signaling pathway"/>
    <property type="evidence" value="ECO:0000315"/>
    <property type="project" value="MGI"/>
</dbReference>
<dbReference type="GO" id="GO:0048011">
    <property type="term" value="P:neurotrophin TRK receptor signaling pathway"/>
    <property type="evidence" value="ECO:0000315"/>
    <property type="project" value="MGI"/>
</dbReference>
<dbReference type="GO" id="GO:0043491">
    <property type="term" value="P:phosphatidylinositol 3-kinase/protein kinase B signal transduction"/>
    <property type="evidence" value="ECO:0000315"/>
    <property type="project" value="MGI"/>
</dbReference>
<dbReference type="GO" id="GO:0072112">
    <property type="term" value="P:podocyte differentiation"/>
    <property type="evidence" value="ECO:0000315"/>
    <property type="project" value="MGI"/>
</dbReference>
<dbReference type="GO" id="GO:1900182">
    <property type="term" value="P:positive regulation of protein localization to nucleus"/>
    <property type="evidence" value="ECO:0000316"/>
    <property type="project" value="MGI"/>
</dbReference>
<dbReference type="GO" id="GO:0050714">
    <property type="term" value="P:positive regulation of protein secretion"/>
    <property type="evidence" value="ECO:0007669"/>
    <property type="project" value="Ensembl"/>
</dbReference>
<dbReference type="GO" id="GO:0030163">
    <property type="term" value="P:protein catabolic process"/>
    <property type="evidence" value="ECO:0000314"/>
    <property type="project" value="MGI"/>
</dbReference>
<dbReference type="GO" id="GO:0051291">
    <property type="term" value="P:protein heterooligomerization"/>
    <property type="evidence" value="ECO:0000314"/>
    <property type="project" value="MGI"/>
</dbReference>
<dbReference type="GO" id="GO:0009306">
    <property type="term" value="P:protein secretion"/>
    <property type="evidence" value="ECO:0000315"/>
    <property type="project" value="MGI"/>
</dbReference>
<dbReference type="GO" id="GO:0015031">
    <property type="term" value="P:protein transport"/>
    <property type="evidence" value="ECO:0000315"/>
    <property type="project" value="MGI"/>
</dbReference>
<dbReference type="GO" id="GO:0032482">
    <property type="term" value="P:Rab protein signal transduction"/>
    <property type="evidence" value="ECO:0000315"/>
    <property type="project" value="MGI"/>
</dbReference>
<dbReference type="GO" id="GO:0032956">
    <property type="term" value="P:regulation of actin cytoskeleton organization"/>
    <property type="evidence" value="ECO:0000316"/>
    <property type="project" value="MGI"/>
</dbReference>
<dbReference type="GO" id="GO:0048167">
    <property type="term" value="P:regulation of synaptic plasticity"/>
    <property type="evidence" value="ECO:0000315"/>
    <property type="project" value="MGI"/>
</dbReference>
<dbReference type="GO" id="GO:0097018">
    <property type="term" value="P:renal albumin absorption"/>
    <property type="evidence" value="ECO:0000315"/>
    <property type="project" value="MGI"/>
</dbReference>
<dbReference type="GO" id="GO:1990790">
    <property type="term" value="P:response to glial cell derived neurotrophic factor"/>
    <property type="evidence" value="ECO:0000314"/>
    <property type="project" value="MGI"/>
</dbReference>
<dbReference type="GO" id="GO:0032868">
    <property type="term" value="P:response to insulin"/>
    <property type="evidence" value="ECO:0000315"/>
    <property type="project" value="MGI"/>
</dbReference>
<dbReference type="GO" id="GO:0006979">
    <property type="term" value="P:response to oxidative stress"/>
    <property type="evidence" value="ECO:0000315"/>
    <property type="project" value="MGI"/>
</dbReference>
<dbReference type="GO" id="GO:0071559">
    <property type="term" value="P:response to transforming growth factor beta"/>
    <property type="evidence" value="ECO:0000315"/>
    <property type="project" value="MGI"/>
</dbReference>
<dbReference type="GO" id="GO:0009615">
    <property type="term" value="P:response to virus"/>
    <property type="evidence" value="ECO:0000314"/>
    <property type="project" value="MGI"/>
</dbReference>
<dbReference type="GO" id="GO:0009611">
    <property type="term" value="P:response to wounding"/>
    <property type="evidence" value="ECO:0000315"/>
    <property type="project" value="MGI"/>
</dbReference>
<dbReference type="GO" id="GO:0051403">
    <property type="term" value="P:stress-activated MAPK cascade"/>
    <property type="evidence" value="ECO:0000315"/>
    <property type="project" value="MGI"/>
</dbReference>
<dbReference type="GO" id="GO:0050808">
    <property type="term" value="P:synapse organization"/>
    <property type="evidence" value="ECO:0000314"/>
    <property type="project" value="SynGO"/>
</dbReference>
<dbReference type="GO" id="GO:0050852">
    <property type="term" value="P:T cell receptor signaling pathway"/>
    <property type="evidence" value="ECO:0000315"/>
    <property type="project" value="MGI"/>
</dbReference>
<dbReference type="GO" id="GO:0032905">
    <property type="term" value="P:transforming growth factor beta1 production"/>
    <property type="evidence" value="ECO:0000316"/>
    <property type="project" value="MGI"/>
</dbReference>
<dbReference type="CDD" id="cd12053">
    <property type="entry name" value="SH3_CD2AP_1"/>
    <property type="match status" value="1"/>
</dbReference>
<dbReference type="CDD" id="cd12054">
    <property type="entry name" value="SH3_CD2AP_2"/>
    <property type="match status" value="1"/>
</dbReference>
<dbReference type="CDD" id="cd12056">
    <property type="entry name" value="SH3_CD2AP_3"/>
    <property type="match status" value="1"/>
</dbReference>
<dbReference type="FunFam" id="2.30.30.40:FF:000094">
    <property type="entry name" value="SH3 domain-containing kinase-binding protein 1"/>
    <property type="match status" value="1"/>
</dbReference>
<dbReference type="FunFam" id="2.30.30.40:FF:000112">
    <property type="entry name" value="SH3 domain-containing kinase-binding protein 1"/>
    <property type="match status" value="1"/>
</dbReference>
<dbReference type="FunFam" id="2.30.30.40:FF:000072">
    <property type="entry name" value="Unconventional Myosin IB"/>
    <property type="match status" value="1"/>
</dbReference>
<dbReference type="Gene3D" id="2.30.30.40">
    <property type="entry name" value="SH3 Domains"/>
    <property type="match status" value="3"/>
</dbReference>
<dbReference type="InterPro" id="IPR035775">
    <property type="entry name" value="CD2AP_SH3_1"/>
</dbReference>
<dbReference type="InterPro" id="IPR035777">
    <property type="entry name" value="CD2AP_SH3_3"/>
</dbReference>
<dbReference type="InterPro" id="IPR035776">
    <property type="entry name" value="CD2AP_SH_2"/>
</dbReference>
<dbReference type="InterPro" id="IPR050384">
    <property type="entry name" value="Endophilin_SH3RF"/>
</dbReference>
<dbReference type="InterPro" id="IPR036028">
    <property type="entry name" value="SH3-like_dom_sf"/>
</dbReference>
<dbReference type="InterPro" id="IPR001452">
    <property type="entry name" value="SH3_domain"/>
</dbReference>
<dbReference type="PANTHER" id="PTHR14167:SF92">
    <property type="entry name" value="CIN85 AND CD2AP RELATED, ISOFORM J"/>
    <property type="match status" value="1"/>
</dbReference>
<dbReference type="PANTHER" id="PTHR14167">
    <property type="entry name" value="SH3 DOMAIN-CONTAINING"/>
    <property type="match status" value="1"/>
</dbReference>
<dbReference type="Pfam" id="PF00018">
    <property type="entry name" value="SH3_1"/>
    <property type="match status" value="1"/>
</dbReference>
<dbReference type="Pfam" id="PF14604">
    <property type="entry name" value="SH3_9"/>
    <property type="match status" value="2"/>
</dbReference>
<dbReference type="PRINTS" id="PR00499">
    <property type="entry name" value="P67PHOX"/>
</dbReference>
<dbReference type="PRINTS" id="PR00452">
    <property type="entry name" value="SH3DOMAIN"/>
</dbReference>
<dbReference type="SMART" id="SM00326">
    <property type="entry name" value="SH3"/>
    <property type="match status" value="3"/>
</dbReference>
<dbReference type="SUPFAM" id="SSF50044">
    <property type="entry name" value="SH3-domain"/>
    <property type="match status" value="3"/>
</dbReference>
<dbReference type="PROSITE" id="PS50002">
    <property type="entry name" value="SH3"/>
    <property type="match status" value="3"/>
</dbReference>
<feature type="chain" id="PRO_0000089436" description="CD2-associated protein">
    <location>
        <begin position="1"/>
        <end position="637"/>
    </location>
</feature>
<feature type="domain" description="SH3 1; truncated" evidence="5">
    <location>
        <begin position="1"/>
        <end position="59"/>
    </location>
</feature>
<feature type="domain" description="SH3 2" evidence="5">
    <location>
        <begin position="108"/>
        <end position="167"/>
    </location>
</feature>
<feature type="domain" description="SH3 3" evidence="5">
    <location>
        <begin position="269"/>
        <end position="330"/>
    </location>
</feature>
<feature type="region of interest" description="Interaction with ANLN and localization to the midbody" evidence="1">
    <location>
        <begin position="1"/>
        <end position="175"/>
    </location>
</feature>
<feature type="region of interest" description="Disordered" evidence="6">
    <location>
        <begin position="166"/>
        <end position="209"/>
    </location>
</feature>
<feature type="region of interest" description="Disordered" evidence="6">
    <location>
        <begin position="226"/>
        <end position="254"/>
    </location>
</feature>
<feature type="region of interest" description="Disordered" evidence="6">
    <location>
        <begin position="333"/>
        <end position="455"/>
    </location>
</feature>
<feature type="region of interest" description="Disordered" evidence="6">
    <location>
        <begin position="488"/>
        <end position="555"/>
    </location>
</feature>
<feature type="coiled-coil region" evidence="4">
    <location>
        <begin position="578"/>
        <end position="636"/>
    </location>
</feature>
<feature type="short sequence motif" description="SH3-binding" evidence="4">
    <location>
        <begin position="336"/>
        <end position="352"/>
    </location>
</feature>
<feature type="short sequence motif" description="SH3-binding" evidence="4">
    <location>
        <begin position="378"/>
        <end position="397"/>
    </location>
</feature>
<feature type="short sequence motif" description="SH3-binding" evidence="4">
    <location>
        <begin position="410"/>
        <end position="422"/>
    </location>
</feature>
<feature type="compositionally biased region" description="Basic and acidic residues" evidence="6">
    <location>
        <begin position="166"/>
        <end position="177"/>
    </location>
</feature>
<feature type="compositionally biased region" description="Pro residues" evidence="6">
    <location>
        <begin position="341"/>
        <end position="351"/>
    </location>
</feature>
<feature type="compositionally biased region" description="Basic and acidic residues" evidence="6">
    <location>
        <begin position="356"/>
        <end position="379"/>
    </location>
</feature>
<feature type="compositionally biased region" description="Basic and acidic residues" evidence="6">
    <location>
        <begin position="437"/>
        <end position="449"/>
    </location>
</feature>
<feature type="compositionally biased region" description="Basic and acidic residues" evidence="6">
    <location>
        <begin position="517"/>
        <end position="539"/>
    </location>
</feature>
<feature type="compositionally biased region" description="Low complexity" evidence="6">
    <location>
        <begin position="540"/>
        <end position="555"/>
    </location>
</feature>
<feature type="modified residue" description="Phosphoserine" evidence="3">
    <location>
        <position position="80"/>
    </location>
</feature>
<feature type="modified residue" description="Phosphoserine" evidence="3">
    <location>
        <position position="86"/>
    </location>
</feature>
<feature type="modified residue" description="Phosphoserine" evidence="18">
    <location>
        <position position="224"/>
    </location>
</feature>
<feature type="modified residue" description="Phosphoserine" evidence="17 18">
    <location>
        <position position="458"/>
    </location>
</feature>
<feature type="modified residue" description="Phosphoserine" evidence="2">
    <location>
        <position position="469"/>
    </location>
</feature>
<feature type="modified residue" description="Phosphoserine" evidence="18">
    <location>
        <position position="510"/>
    </location>
</feature>
<feature type="modified residue" description="Phosphoserine" evidence="18">
    <location>
        <position position="514"/>
    </location>
</feature>
<feature type="modified residue" description="Phosphothreonine" evidence="3">
    <location>
        <position position="563"/>
    </location>
</feature>
<feature type="modified residue" description="Phosphoserine" evidence="3">
    <location>
        <position position="580"/>
    </location>
</feature>
<feature type="cross-link" description="Glycyl lysine isopeptide (Lys-Gly) (interchain with G-Cter in SUMO2)" evidence="3">
    <location>
        <position position="58"/>
    </location>
</feature>
<feature type="cross-link" description="Glycyl lysine isopeptide (Lys-Gly) (interchain with G-Cter in SUMO2)" evidence="3">
    <location>
        <position position="523"/>
    </location>
</feature>
<feature type="sequence conflict" description="In Ref. 2; AAF73150." evidence="16" ref="2">
    <original>V</original>
    <variation>E</variation>
    <location>
        <position position="78"/>
    </location>
</feature>
<feature type="sequence conflict" description="In Ref. 1; AAC36099." evidence="16" ref="1">
    <location>
        <position position="107"/>
    </location>
</feature>
<feature type="sequence conflict" description="In Ref. 1; AAC36099." evidence="16" ref="1">
    <original>K</original>
    <variation>Q</variation>
    <location>
        <position position="110"/>
    </location>
</feature>
<feature type="sequence conflict" description="In Ref. 1; AAC36099." evidence="16" ref="1">
    <original>P</original>
    <variation>R</variation>
    <location>
        <position position="244"/>
    </location>
</feature>
<feature type="sequence conflict" description="In Ref. 1; AAC36099." evidence="16" ref="1">
    <original>IIH</original>
    <variation>LS</variation>
    <location>
        <begin position="295"/>
        <end position="297"/>
    </location>
</feature>
<feature type="sequence conflict" description="In Ref. 1; AAC36099." evidence="16" ref="1">
    <original>P</original>
    <variation>PTAPTKA</variation>
    <location>
        <position position="392"/>
    </location>
</feature>
<feature type="sequence conflict" description="In Ref. 2; AAF73150, 3; CAD30510 and 5; AAH19744." evidence="16" ref="2 3 5">
    <original>S</original>
    <variation>P</variation>
    <location>
        <position position="545"/>
    </location>
</feature>
<feature type="sequence conflict" description="In Ref. 2; AAF73150, 3; CAD30510 and 5; AAH19744." evidence="16" ref="2 3 5">
    <original>R</original>
    <variation>K</variation>
    <location>
        <position position="578"/>
    </location>
</feature>
<feature type="strand" evidence="20">
    <location>
        <begin position="4"/>
        <end position="6"/>
    </location>
</feature>
<feature type="strand" evidence="22">
    <location>
        <begin position="8"/>
        <end position="10"/>
    </location>
</feature>
<feature type="strand" evidence="20">
    <location>
        <begin position="14"/>
        <end position="17"/>
    </location>
</feature>
<feature type="strand" evidence="20">
    <location>
        <begin position="25"/>
        <end position="31"/>
    </location>
</feature>
<feature type="strand" evidence="20">
    <location>
        <begin position="37"/>
        <end position="42"/>
    </location>
</feature>
<feature type="strand" evidence="20">
    <location>
        <begin position="45"/>
        <end position="50"/>
    </location>
</feature>
<feature type="helix" evidence="20">
    <location>
        <begin position="51"/>
        <end position="53"/>
    </location>
</feature>
<feature type="strand" evidence="20">
    <location>
        <begin position="54"/>
        <end position="56"/>
    </location>
</feature>
<feature type="strand" evidence="21">
    <location>
        <begin position="113"/>
        <end position="115"/>
    </location>
</feature>
<feature type="strand" evidence="21">
    <location>
        <begin position="134"/>
        <end position="142"/>
    </location>
</feature>
<feature type="strand" evidence="21">
    <location>
        <begin position="145"/>
        <end position="150"/>
    </location>
</feature>
<feature type="strand" evidence="21">
    <location>
        <begin position="153"/>
        <end position="158"/>
    </location>
</feature>
<feature type="turn" evidence="21">
    <location>
        <begin position="159"/>
        <end position="161"/>
    </location>
</feature>
<feature type="strand" evidence="19">
    <location>
        <begin position="270"/>
        <end position="278"/>
    </location>
</feature>
<feature type="strand" evidence="19">
    <location>
        <begin position="283"/>
        <end position="287"/>
    </location>
</feature>
<feature type="strand" evidence="19">
    <location>
        <begin position="295"/>
        <end position="301"/>
    </location>
</feature>
<feature type="strand" evidence="19">
    <location>
        <begin position="303"/>
        <end position="313"/>
    </location>
</feature>
<feature type="strand" evidence="19">
    <location>
        <begin position="316"/>
        <end position="321"/>
    </location>
</feature>
<feature type="helix" evidence="19">
    <location>
        <begin position="322"/>
        <end position="324"/>
    </location>
</feature>
<feature type="strand" evidence="19">
    <location>
        <begin position="325"/>
        <end position="329"/>
    </location>
</feature>